<comment type="catalytic activity">
    <reaction evidence="1">
        <text>5-amino-1-(5-phospho-D-ribosyl)imidazole-4-carboxylate + L-aspartate + ATP = (2S)-2-[5-amino-1-(5-phospho-beta-D-ribosyl)imidazole-4-carboxamido]succinate + ADP + phosphate + 2 H(+)</text>
        <dbReference type="Rhea" id="RHEA:22628"/>
        <dbReference type="ChEBI" id="CHEBI:15378"/>
        <dbReference type="ChEBI" id="CHEBI:29991"/>
        <dbReference type="ChEBI" id="CHEBI:30616"/>
        <dbReference type="ChEBI" id="CHEBI:43474"/>
        <dbReference type="ChEBI" id="CHEBI:58443"/>
        <dbReference type="ChEBI" id="CHEBI:77657"/>
        <dbReference type="ChEBI" id="CHEBI:456216"/>
        <dbReference type="EC" id="6.3.2.6"/>
    </reaction>
</comment>
<comment type="pathway">
    <text evidence="1">Purine metabolism; IMP biosynthesis via de novo pathway; 5-amino-1-(5-phospho-D-ribosyl)imidazole-4-carboxamide from 5-amino-1-(5-phospho-D-ribosyl)imidazole-4-carboxylate: step 1/2.</text>
</comment>
<comment type="similarity">
    <text evidence="1">Belongs to the SAICAR synthetase family.</text>
</comment>
<evidence type="ECO:0000255" key="1">
    <source>
        <dbReference type="HAMAP-Rule" id="MF_00137"/>
    </source>
</evidence>
<keyword id="KW-0067">ATP-binding</keyword>
<keyword id="KW-0436">Ligase</keyword>
<keyword id="KW-0547">Nucleotide-binding</keyword>
<keyword id="KW-0658">Purine biosynthesis</keyword>
<proteinExistence type="inferred from homology"/>
<organism>
    <name type="scientific">Vibrio campbellii (strain ATCC BAA-1116)</name>
    <dbReference type="NCBI Taxonomy" id="2902295"/>
    <lineage>
        <taxon>Bacteria</taxon>
        <taxon>Pseudomonadati</taxon>
        <taxon>Pseudomonadota</taxon>
        <taxon>Gammaproteobacteria</taxon>
        <taxon>Vibrionales</taxon>
        <taxon>Vibrionaceae</taxon>
        <taxon>Vibrio</taxon>
    </lineage>
</organism>
<sequence length="367" mass="41074">MSLANQVLAVNDDLPIRTHKPVHSGKVRSVYWLTEEDSARLIKEKGYDVAPDAPLAIMVISDRISAFDCIWHGEGGLKGVPGKGAALNAISNHWFKLFKDNGLADSHILDIPHPFVWIVQKAKPVKIEAICRKYITGSMWRAYANGEREFCGIELPEGLEKDKALPELLMTPSTKGILKGIPGVPEADDVNITRQNIVDNFEAFNFSNAKDIAQYEKLLKEGFNVISSALEAIDQTFVDTKFEFGYVHDAAGNEKLIYMDEVGTPDSSRIWDTKEYQAGNIVENSKEGFRQFLLSHFPDPDILLNKERMPEREALARDNELPVESLMDISRTYIGIAEKITGQPIKLSNDPKAEIIEILSKEYGLID</sequence>
<name>PUR7_VIBC1</name>
<reference key="1">
    <citation type="submission" date="2007-08" db="EMBL/GenBank/DDBJ databases">
        <authorList>
            <consortium name="The Vibrio harveyi Genome Sequencing Project"/>
            <person name="Bassler B."/>
            <person name="Clifton S.W."/>
            <person name="Fulton L."/>
            <person name="Delehaunty K."/>
            <person name="Fronick C."/>
            <person name="Harrison M."/>
            <person name="Markivic C."/>
            <person name="Fulton R."/>
            <person name="Tin-Wollam A.-M."/>
            <person name="Shah N."/>
            <person name="Pepin K."/>
            <person name="Nash W."/>
            <person name="Thiruvilangam P."/>
            <person name="Bhonagiri V."/>
            <person name="Waters C."/>
            <person name="Tu K.C."/>
            <person name="Irgon J."/>
            <person name="Wilson R.K."/>
        </authorList>
    </citation>
    <scope>NUCLEOTIDE SEQUENCE [LARGE SCALE GENOMIC DNA]</scope>
    <source>
        <strain>ATCC BAA-1116 / BB120</strain>
    </source>
</reference>
<dbReference type="EC" id="6.3.2.6" evidence="1"/>
<dbReference type="EMBL" id="CP000789">
    <property type="protein sequence ID" value="ABU71004.1"/>
    <property type="molecule type" value="Genomic_DNA"/>
</dbReference>
<dbReference type="RefSeq" id="WP_012127782.1">
    <property type="nucleotide sequence ID" value="NC_009783.1"/>
</dbReference>
<dbReference type="SMR" id="A7MVN0"/>
<dbReference type="KEGG" id="vha:VIBHAR_02039"/>
<dbReference type="PATRIC" id="fig|338187.25.peg.650"/>
<dbReference type="UniPathway" id="UPA00074">
    <property type="reaction ID" value="UER00131"/>
</dbReference>
<dbReference type="Proteomes" id="UP000008152">
    <property type="component" value="Chromosome I"/>
</dbReference>
<dbReference type="GO" id="GO:0005737">
    <property type="term" value="C:cytoplasm"/>
    <property type="evidence" value="ECO:0007669"/>
    <property type="project" value="TreeGrafter"/>
</dbReference>
<dbReference type="GO" id="GO:0005524">
    <property type="term" value="F:ATP binding"/>
    <property type="evidence" value="ECO:0007669"/>
    <property type="project" value="UniProtKB-KW"/>
</dbReference>
<dbReference type="GO" id="GO:0004639">
    <property type="term" value="F:phosphoribosylaminoimidazolesuccinocarboxamide synthase activity"/>
    <property type="evidence" value="ECO:0007669"/>
    <property type="project" value="UniProtKB-UniRule"/>
</dbReference>
<dbReference type="GO" id="GO:0006189">
    <property type="term" value="P:'de novo' IMP biosynthetic process"/>
    <property type="evidence" value="ECO:0007669"/>
    <property type="project" value="UniProtKB-UniRule"/>
</dbReference>
<dbReference type="CDD" id="cd01414">
    <property type="entry name" value="SAICAR_synt_Sc"/>
    <property type="match status" value="1"/>
</dbReference>
<dbReference type="Gene3D" id="3.30.470.20">
    <property type="entry name" value="ATP-grasp fold, B domain"/>
    <property type="match status" value="1"/>
</dbReference>
<dbReference type="Gene3D" id="3.30.200.20">
    <property type="entry name" value="Phosphorylase Kinase, domain 1"/>
    <property type="match status" value="1"/>
</dbReference>
<dbReference type="HAMAP" id="MF_00137">
    <property type="entry name" value="SAICAR_synth"/>
    <property type="match status" value="1"/>
</dbReference>
<dbReference type="InterPro" id="IPR028923">
    <property type="entry name" value="SAICAR_synt/ADE2_N"/>
</dbReference>
<dbReference type="InterPro" id="IPR014106">
    <property type="entry name" value="SAICAR_synthase_Vibrio-typ"/>
</dbReference>
<dbReference type="InterPro" id="IPR018236">
    <property type="entry name" value="SAICAR_synthetase_CS"/>
</dbReference>
<dbReference type="NCBIfam" id="NF010567">
    <property type="entry name" value="PRK13960.1"/>
    <property type="match status" value="1"/>
</dbReference>
<dbReference type="NCBIfam" id="TIGR02735">
    <property type="entry name" value="purC_vibrio"/>
    <property type="match status" value="1"/>
</dbReference>
<dbReference type="PANTHER" id="PTHR43700">
    <property type="entry name" value="PHOSPHORIBOSYLAMINOIMIDAZOLE-SUCCINOCARBOXAMIDE SYNTHASE"/>
    <property type="match status" value="1"/>
</dbReference>
<dbReference type="PANTHER" id="PTHR43700:SF1">
    <property type="entry name" value="PHOSPHORIBOSYLAMINOIMIDAZOLE-SUCCINOCARBOXAMIDE SYNTHASE"/>
    <property type="match status" value="1"/>
</dbReference>
<dbReference type="Pfam" id="PF01259">
    <property type="entry name" value="SAICAR_synt"/>
    <property type="match status" value="1"/>
</dbReference>
<dbReference type="SUPFAM" id="SSF56104">
    <property type="entry name" value="SAICAR synthase-like"/>
    <property type="match status" value="1"/>
</dbReference>
<dbReference type="PROSITE" id="PS01057">
    <property type="entry name" value="SAICAR_SYNTHETASE_1"/>
    <property type="match status" value="1"/>
</dbReference>
<feature type="chain" id="PRO_1000117862" description="Phosphoribosylaminoimidazole-succinocarboxamide synthase">
    <location>
        <begin position="1"/>
        <end position="367"/>
    </location>
</feature>
<protein>
    <recommendedName>
        <fullName evidence="1">Phosphoribosylaminoimidazole-succinocarboxamide synthase</fullName>
        <ecNumber evidence="1">6.3.2.6</ecNumber>
    </recommendedName>
    <alternativeName>
        <fullName evidence="1">SAICAR synthetase</fullName>
    </alternativeName>
</protein>
<gene>
    <name evidence="1" type="primary">purC</name>
    <name type="ordered locus">VIBHAR_02039</name>
</gene>
<accession>A7MVN0</accession>